<proteinExistence type="inferred from homology"/>
<reference key="1">
    <citation type="journal article" date="2004" name="Nucleic Acids Res.">
        <title>Comparative analysis of the Borrelia garinii genome.</title>
        <authorList>
            <person name="Gloeckner G."/>
            <person name="Lehmann R."/>
            <person name="Romualdi A."/>
            <person name="Pradella S."/>
            <person name="Schulte-Spechtel U."/>
            <person name="Schilhabel M."/>
            <person name="Wilske B."/>
            <person name="Suehnel J."/>
            <person name="Platzer M."/>
        </authorList>
    </citation>
    <scope>NUCLEOTIDE SEQUENCE [LARGE SCALE GENOMIC DNA]</scope>
    <source>
        <strain>ATCC BAA-2496 / DSM 23469 / PBi</strain>
    </source>
</reference>
<sequence>MFLEKLNSATSKIKLIEEKLQDINLIKNQKKYSKIIKEYTYLEKINTKKIEYEKILSQINDNKTILEKEDQQEMKELIKQELIDLDKKKEDLEHQIKILLLPQDENDSKNIIIEIRAGTGGEEAALFANNLYSMYIKYSERKKWKTEIINFNETELGGFKEIVFEIKGKDVFKKLKYESGVHRVQRIPITESNGRLQTSAATVAVLPNIEETEIDINEKDLRIDVYRSSGAGGQHVNTTDSAVRITHLPTGIVVQCQNERSQHKNKDQAMKILRARLYEFEDSKKQEQRSSNRKQQVGSGDRSERIRTYNFPQNRITDHRANITLYKLEEFMQGELDPLLDPLTIELQEQKFKSNNI</sequence>
<dbReference type="EMBL" id="CP000013">
    <property type="protein sequence ID" value="AAU07052.1"/>
    <property type="molecule type" value="Genomic_DNA"/>
</dbReference>
<dbReference type="RefSeq" id="WP_011193540.1">
    <property type="nucleotide sequence ID" value="NZ_CP028872.1"/>
</dbReference>
<dbReference type="SMR" id="Q662G9"/>
<dbReference type="GeneID" id="45160987"/>
<dbReference type="KEGG" id="bga:BG0194"/>
<dbReference type="eggNOG" id="COG0216">
    <property type="taxonomic scope" value="Bacteria"/>
</dbReference>
<dbReference type="HOGENOM" id="CLU_036856_0_1_12"/>
<dbReference type="OrthoDB" id="9806673at2"/>
<dbReference type="Proteomes" id="UP000002276">
    <property type="component" value="Chromosome"/>
</dbReference>
<dbReference type="GO" id="GO:0005737">
    <property type="term" value="C:cytoplasm"/>
    <property type="evidence" value="ECO:0007669"/>
    <property type="project" value="UniProtKB-SubCell"/>
</dbReference>
<dbReference type="GO" id="GO:0016149">
    <property type="term" value="F:translation release factor activity, codon specific"/>
    <property type="evidence" value="ECO:0007669"/>
    <property type="project" value="UniProtKB-UniRule"/>
</dbReference>
<dbReference type="FunFam" id="3.30.160.20:FF:000004">
    <property type="entry name" value="Peptide chain release factor 1"/>
    <property type="match status" value="1"/>
</dbReference>
<dbReference type="FunFam" id="3.30.70.1660:FF:000002">
    <property type="entry name" value="Peptide chain release factor 1"/>
    <property type="match status" value="1"/>
</dbReference>
<dbReference type="FunFam" id="3.30.70.1660:FF:000004">
    <property type="entry name" value="Peptide chain release factor 1"/>
    <property type="match status" value="1"/>
</dbReference>
<dbReference type="Gene3D" id="3.30.160.20">
    <property type="match status" value="1"/>
</dbReference>
<dbReference type="Gene3D" id="3.30.70.1660">
    <property type="match status" value="1"/>
</dbReference>
<dbReference type="Gene3D" id="6.10.140.1950">
    <property type="match status" value="1"/>
</dbReference>
<dbReference type="HAMAP" id="MF_00093">
    <property type="entry name" value="Rel_fac_1"/>
    <property type="match status" value="1"/>
</dbReference>
<dbReference type="InterPro" id="IPR005139">
    <property type="entry name" value="PCRF"/>
</dbReference>
<dbReference type="InterPro" id="IPR000352">
    <property type="entry name" value="Pep_chain_release_fac_I"/>
</dbReference>
<dbReference type="InterPro" id="IPR045853">
    <property type="entry name" value="Pep_chain_release_fac_I_sf"/>
</dbReference>
<dbReference type="InterPro" id="IPR050057">
    <property type="entry name" value="Prokaryotic/Mito_RF"/>
</dbReference>
<dbReference type="InterPro" id="IPR004373">
    <property type="entry name" value="RF-1"/>
</dbReference>
<dbReference type="NCBIfam" id="TIGR00019">
    <property type="entry name" value="prfA"/>
    <property type="match status" value="1"/>
</dbReference>
<dbReference type="NCBIfam" id="NF001859">
    <property type="entry name" value="PRK00591.1"/>
    <property type="match status" value="1"/>
</dbReference>
<dbReference type="PANTHER" id="PTHR43804">
    <property type="entry name" value="LD18447P"/>
    <property type="match status" value="1"/>
</dbReference>
<dbReference type="PANTHER" id="PTHR43804:SF7">
    <property type="entry name" value="LD18447P"/>
    <property type="match status" value="1"/>
</dbReference>
<dbReference type="Pfam" id="PF03462">
    <property type="entry name" value="PCRF"/>
    <property type="match status" value="1"/>
</dbReference>
<dbReference type="Pfam" id="PF00472">
    <property type="entry name" value="RF-1"/>
    <property type="match status" value="1"/>
</dbReference>
<dbReference type="SMART" id="SM00937">
    <property type="entry name" value="PCRF"/>
    <property type="match status" value="1"/>
</dbReference>
<dbReference type="SUPFAM" id="SSF75620">
    <property type="entry name" value="Release factor"/>
    <property type="match status" value="1"/>
</dbReference>
<dbReference type="PROSITE" id="PS00745">
    <property type="entry name" value="RF_PROK_I"/>
    <property type="match status" value="1"/>
</dbReference>
<comment type="function">
    <text evidence="1">Peptide chain release factor 1 directs the termination of translation in response to the peptide chain termination codons UAG and UAA.</text>
</comment>
<comment type="subcellular location">
    <subcellularLocation>
        <location evidence="1">Cytoplasm</location>
    </subcellularLocation>
</comment>
<comment type="PTM">
    <text evidence="1">Methylated by PrmC. Methylation increases the termination efficiency of RF1.</text>
</comment>
<comment type="similarity">
    <text evidence="1">Belongs to the prokaryotic/mitochondrial release factor family.</text>
</comment>
<protein>
    <recommendedName>
        <fullName evidence="1">Peptide chain release factor 1</fullName>
        <shortName evidence="1">RF-1</shortName>
    </recommendedName>
</protein>
<keyword id="KW-0963">Cytoplasm</keyword>
<keyword id="KW-0488">Methylation</keyword>
<keyword id="KW-0648">Protein biosynthesis</keyword>
<feature type="chain" id="PRO_0000177640" description="Peptide chain release factor 1">
    <location>
        <begin position="1"/>
        <end position="357"/>
    </location>
</feature>
<feature type="region of interest" description="Disordered" evidence="2">
    <location>
        <begin position="283"/>
        <end position="313"/>
    </location>
</feature>
<feature type="modified residue" description="N5-methylglutamine" evidence="1">
    <location>
        <position position="234"/>
    </location>
</feature>
<evidence type="ECO:0000255" key="1">
    <source>
        <dbReference type="HAMAP-Rule" id="MF_00093"/>
    </source>
</evidence>
<evidence type="ECO:0000256" key="2">
    <source>
        <dbReference type="SAM" id="MobiDB-lite"/>
    </source>
</evidence>
<name>RF1_BORGP</name>
<accession>Q662G9</accession>
<organism>
    <name type="scientific">Borrelia garinii subsp. bavariensis (strain ATCC BAA-2496 / DSM 23469 / PBi)</name>
    <name type="common">Borreliella bavariensis</name>
    <dbReference type="NCBI Taxonomy" id="290434"/>
    <lineage>
        <taxon>Bacteria</taxon>
        <taxon>Pseudomonadati</taxon>
        <taxon>Spirochaetota</taxon>
        <taxon>Spirochaetia</taxon>
        <taxon>Spirochaetales</taxon>
        <taxon>Borreliaceae</taxon>
        <taxon>Borreliella</taxon>
    </lineage>
</organism>
<gene>
    <name evidence="1" type="primary">prfA</name>
    <name type="ordered locus">BG0194</name>
</gene>